<organism>
    <name type="scientific">Escherichia coli O6:H1 (strain CFT073 / ATCC 700928 / UPEC)</name>
    <dbReference type="NCBI Taxonomy" id="199310"/>
    <lineage>
        <taxon>Bacteria</taxon>
        <taxon>Pseudomonadati</taxon>
        <taxon>Pseudomonadota</taxon>
        <taxon>Gammaproteobacteria</taxon>
        <taxon>Enterobacterales</taxon>
        <taxon>Enterobacteriaceae</taxon>
        <taxon>Escherichia</taxon>
    </lineage>
</organism>
<proteinExistence type="inferred from homology"/>
<sequence>MPYLLEMKNITKTFGSVKAIDNVSLRLNAGEIVSLCGENGSGKSTLMKVLCGIYPHGSYEGEIIFAGEEIQASHIRDTERKGIAIIHQELALVKELTVLENIFLGNEITHNGIMDYDLMTLRCQKLLAQVSLSISPDTRVGDLGLGQQQLVEIAKALNKQVRLLILDEPTASLTEQETSVLLDIIRDLQQHGIACIYISHKLNEVKAISDTICVIRDGQHIGTRDAAGMSEDDIITMMVGRELTALYPNEPHTTGDEILRIEHLTAWHPVNRHIKRVNDVSFSLKRGEILGIAGLVGAGRTETIQCLFGVWPGQWEGKIYIDGKQVDIRNCQQAIAQGIAMVPEDRKRDGIVPVMAVGKNITLAALKKFTGSISQLDDAAEQKCILESIQQLKVKTSSPDLAIGRLSGGNQQKAILARCLLLNPRILILDEPTRGIDIGAKYEIYKLINQLVQQGIAVIVISSELPEVLGLSDRVLVMHEGKLKANLINHNLTQEQVMEAALRSEHHVEKQSV</sequence>
<feature type="chain" id="PRO_0000271503" description="Xylose import ATP-binding protein XylG">
    <location>
        <begin position="1"/>
        <end position="513"/>
    </location>
</feature>
<feature type="domain" description="ABC transporter 1" evidence="1">
    <location>
        <begin position="5"/>
        <end position="242"/>
    </location>
</feature>
<feature type="domain" description="ABC transporter 2" evidence="1">
    <location>
        <begin position="259"/>
        <end position="505"/>
    </location>
</feature>
<feature type="binding site" evidence="1">
    <location>
        <begin position="37"/>
        <end position="44"/>
    </location>
    <ligand>
        <name>ATP</name>
        <dbReference type="ChEBI" id="CHEBI:30616"/>
    </ligand>
</feature>
<gene>
    <name evidence="1" type="primary">xylG</name>
    <name type="ordered locus">c4387</name>
</gene>
<keyword id="KW-0067">ATP-binding</keyword>
<keyword id="KW-0997">Cell inner membrane</keyword>
<keyword id="KW-1003">Cell membrane</keyword>
<keyword id="KW-0472">Membrane</keyword>
<keyword id="KW-0547">Nucleotide-binding</keyword>
<keyword id="KW-1185">Reference proteome</keyword>
<keyword id="KW-0677">Repeat</keyword>
<keyword id="KW-0762">Sugar transport</keyword>
<keyword id="KW-1278">Translocase</keyword>
<keyword id="KW-0813">Transport</keyword>
<reference key="1">
    <citation type="journal article" date="2002" name="Proc. Natl. Acad. Sci. U.S.A.">
        <title>Extensive mosaic structure revealed by the complete genome sequence of uropathogenic Escherichia coli.</title>
        <authorList>
            <person name="Welch R.A."/>
            <person name="Burland V."/>
            <person name="Plunkett G. III"/>
            <person name="Redford P."/>
            <person name="Roesch P."/>
            <person name="Rasko D."/>
            <person name="Buckles E.L."/>
            <person name="Liou S.-R."/>
            <person name="Boutin A."/>
            <person name="Hackett J."/>
            <person name="Stroud D."/>
            <person name="Mayhew G.F."/>
            <person name="Rose D.J."/>
            <person name="Zhou S."/>
            <person name="Schwartz D.C."/>
            <person name="Perna N.T."/>
            <person name="Mobley H.L.T."/>
            <person name="Donnenberg M.S."/>
            <person name="Blattner F.R."/>
        </authorList>
    </citation>
    <scope>NUCLEOTIDE SEQUENCE [LARGE SCALE GENOMIC DNA]</scope>
    <source>
        <strain>CFT073 / ATCC 700928 / UPEC</strain>
    </source>
</reference>
<protein>
    <recommendedName>
        <fullName evidence="1">Xylose import ATP-binding protein XylG</fullName>
        <ecNumber evidence="1">7.5.2.10</ecNumber>
    </recommendedName>
</protein>
<dbReference type="EC" id="7.5.2.10" evidence="1"/>
<dbReference type="EMBL" id="AE014075">
    <property type="protein sequence ID" value="AAN82823.1"/>
    <property type="status" value="ALT_INIT"/>
    <property type="molecule type" value="Genomic_DNA"/>
</dbReference>
<dbReference type="RefSeq" id="WP_001146503.1">
    <property type="nucleotide sequence ID" value="NZ_CP051263.1"/>
</dbReference>
<dbReference type="SMR" id="Q8FCE2"/>
<dbReference type="STRING" id="199310.c4387"/>
<dbReference type="KEGG" id="ecc:c4387"/>
<dbReference type="eggNOG" id="COG1129">
    <property type="taxonomic scope" value="Bacteria"/>
</dbReference>
<dbReference type="HOGENOM" id="CLU_000604_92_3_6"/>
<dbReference type="Proteomes" id="UP000001410">
    <property type="component" value="Chromosome"/>
</dbReference>
<dbReference type="GO" id="GO:0005886">
    <property type="term" value="C:plasma membrane"/>
    <property type="evidence" value="ECO:0007669"/>
    <property type="project" value="UniProtKB-SubCell"/>
</dbReference>
<dbReference type="GO" id="GO:0015614">
    <property type="term" value="F:ABC-type D-xylose transporter activity"/>
    <property type="evidence" value="ECO:0007669"/>
    <property type="project" value="UniProtKB-EC"/>
</dbReference>
<dbReference type="GO" id="GO:0005524">
    <property type="term" value="F:ATP binding"/>
    <property type="evidence" value="ECO:0007669"/>
    <property type="project" value="UniProtKB-KW"/>
</dbReference>
<dbReference type="GO" id="GO:0016887">
    <property type="term" value="F:ATP hydrolysis activity"/>
    <property type="evidence" value="ECO:0007669"/>
    <property type="project" value="InterPro"/>
</dbReference>
<dbReference type="CDD" id="cd03216">
    <property type="entry name" value="ABC_Carb_Monos_I"/>
    <property type="match status" value="1"/>
</dbReference>
<dbReference type="CDD" id="cd03215">
    <property type="entry name" value="ABC_Carb_Monos_II"/>
    <property type="match status" value="1"/>
</dbReference>
<dbReference type="FunFam" id="3.40.50.300:FF:000126">
    <property type="entry name" value="Galactose/methyl galactoside import ATP-binding protein MglA"/>
    <property type="match status" value="1"/>
</dbReference>
<dbReference type="FunFam" id="3.40.50.300:FF:000127">
    <property type="entry name" value="Ribose import ATP-binding protein RbsA"/>
    <property type="match status" value="1"/>
</dbReference>
<dbReference type="Gene3D" id="3.40.50.300">
    <property type="entry name" value="P-loop containing nucleotide triphosphate hydrolases"/>
    <property type="match status" value="2"/>
</dbReference>
<dbReference type="InterPro" id="IPR003593">
    <property type="entry name" value="AAA+_ATPase"/>
</dbReference>
<dbReference type="InterPro" id="IPR050107">
    <property type="entry name" value="ABC_carbohydrate_import_ATPase"/>
</dbReference>
<dbReference type="InterPro" id="IPR003439">
    <property type="entry name" value="ABC_transporter-like_ATP-bd"/>
</dbReference>
<dbReference type="InterPro" id="IPR017871">
    <property type="entry name" value="ABC_transporter-like_CS"/>
</dbReference>
<dbReference type="InterPro" id="IPR013455">
    <property type="entry name" value="ABC_transptr_XylG"/>
</dbReference>
<dbReference type="InterPro" id="IPR027417">
    <property type="entry name" value="P-loop_NTPase"/>
</dbReference>
<dbReference type="NCBIfam" id="NF010069">
    <property type="entry name" value="PRK13549.1"/>
    <property type="match status" value="1"/>
</dbReference>
<dbReference type="NCBIfam" id="TIGR02633">
    <property type="entry name" value="xylG"/>
    <property type="match status" value="1"/>
</dbReference>
<dbReference type="PANTHER" id="PTHR43790">
    <property type="entry name" value="CARBOHYDRATE TRANSPORT ATP-BINDING PROTEIN MG119-RELATED"/>
    <property type="match status" value="1"/>
</dbReference>
<dbReference type="PANTHER" id="PTHR43790:SF1">
    <property type="entry name" value="XYLOSE IMPORT ATP-BINDING PROTEIN XYLG"/>
    <property type="match status" value="1"/>
</dbReference>
<dbReference type="Pfam" id="PF00005">
    <property type="entry name" value="ABC_tran"/>
    <property type="match status" value="2"/>
</dbReference>
<dbReference type="SMART" id="SM00382">
    <property type="entry name" value="AAA"/>
    <property type="match status" value="2"/>
</dbReference>
<dbReference type="SUPFAM" id="SSF52540">
    <property type="entry name" value="P-loop containing nucleoside triphosphate hydrolases"/>
    <property type="match status" value="2"/>
</dbReference>
<dbReference type="PROSITE" id="PS00211">
    <property type="entry name" value="ABC_TRANSPORTER_1"/>
    <property type="match status" value="1"/>
</dbReference>
<dbReference type="PROSITE" id="PS50893">
    <property type="entry name" value="ABC_TRANSPORTER_2"/>
    <property type="match status" value="2"/>
</dbReference>
<dbReference type="PROSITE" id="PS51280">
    <property type="entry name" value="XYLG"/>
    <property type="match status" value="1"/>
</dbReference>
<comment type="function">
    <text evidence="1">Part of the ABC transporter complex XylFGH involved in xylose import. Responsible for energy coupling to the transport system.</text>
</comment>
<comment type="catalytic activity">
    <reaction evidence="1">
        <text>D-xylose(out) + ATP + H2O = D-xylose(in) + ADP + phosphate + H(+)</text>
        <dbReference type="Rhea" id="RHEA:29899"/>
        <dbReference type="ChEBI" id="CHEBI:15377"/>
        <dbReference type="ChEBI" id="CHEBI:15378"/>
        <dbReference type="ChEBI" id="CHEBI:30616"/>
        <dbReference type="ChEBI" id="CHEBI:43474"/>
        <dbReference type="ChEBI" id="CHEBI:53455"/>
        <dbReference type="ChEBI" id="CHEBI:456216"/>
        <dbReference type="EC" id="7.5.2.10"/>
    </reaction>
</comment>
<comment type="subunit">
    <text evidence="1">The complex is composed of two ATP-binding proteins (XylG), two transmembrane proteins (XylH) and a solute-binding protein (XylF).</text>
</comment>
<comment type="subcellular location">
    <subcellularLocation>
        <location evidence="1">Cell inner membrane</location>
        <topology evidence="1">Peripheral membrane protein</topology>
    </subcellularLocation>
</comment>
<comment type="similarity">
    <text evidence="1">Belongs to the ABC transporter superfamily. Xylose importer (TC 3.A.1.2.4) family.</text>
</comment>
<comment type="sequence caution" evidence="2">
    <conflict type="erroneous initiation">
        <sequence resource="EMBL-CDS" id="AAN82823"/>
    </conflict>
</comment>
<accession>Q8FCE2</accession>
<name>XYLG_ECOL6</name>
<evidence type="ECO:0000255" key="1">
    <source>
        <dbReference type="HAMAP-Rule" id="MF_01722"/>
    </source>
</evidence>
<evidence type="ECO:0000305" key="2"/>